<reference key="1">
    <citation type="journal article" date="2005" name="Science">
        <title>The genome of the basidiomycetous yeast and human pathogen Cryptococcus neoformans.</title>
        <authorList>
            <person name="Loftus B.J."/>
            <person name="Fung E."/>
            <person name="Roncaglia P."/>
            <person name="Rowley D."/>
            <person name="Amedeo P."/>
            <person name="Bruno D."/>
            <person name="Vamathevan J."/>
            <person name="Miranda M."/>
            <person name="Anderson I.J."/>
            <person name="Fraser J.A."/>
            <person name="Allen J.E."/>
            <person name="Bosdet I.E."/>
            <person name="Brent M.R."/>
            <person name="Chiu R."/>
            <person name="Doering T.L."/>
            <person name="Donlin M.J."/>
            <person name="D'Souza C.A."/>
            <person name="Fox D.S."/>
            <person name="Grinberg V."/>
            <person name="Fu J."/>
            <person name="Fukushima M."/>
            <person name="Haas B.J."/>
            <person name="Huang J.C."/>
            <person name="Janbon G."/>
            <person name="Jones S.J.M."/>
            <person name="Koo H.L."/>
            <person name="Krzywinski M.I."/>
            <person name="Kwon-Chung K.J."/>
            <person name="Lengeler K.B."/>
            <person name="Maiti R."/>
            <person name="Marra M.A."/>
            <person name="Marra R.E."/>
            <person name="Mathewson C.A."/>
            <person name="Mitchell T.G."/>
            <person name="Pertea M."/>
            <person name="Riggs F.R."/>
            <person name="Salzberg S.L."/>
            <person name="Schein J.E."/>
            <person name="Shvartsbeyn A."/>
            <person name="Shin H."/>
            <person name="Shumway M."/>
            <person name="Specht C.A."/>
            <person name="Suh B.B."/>
            <person name="Tenney A."/>
            <person name="Utterback T.R."/>
            <person name="Wickes B.L."/>
            <person name="Wortman J.R."/>
            <person name="Wye N.H."/>
            <person name="Kronstad J.W."/>
            <person name="Lodge J.K."/>
            <person name="Heitman J."/>
            <person name="Davis R.W."/>
            <person name="Fraser C.M."/>
            <person name="Hyman R.W."/>
        </authorList>
    </citation>
    <scope>NUCLEOTIDE SEQUENCE [LARGE SCALE GENOMIC DNA]</scope>
    <source>
        <strain>B-3501A</strain>
    </source>
</reference>
<organism>
    <name type="scientific">Cryptococcus neoformans var. neoformans serotype D (strain B-3501A)</name>
    <name type="common">Filobasidiella neoformans</name>
    <dbReference type="NCBI Taxonomy" id="283643"/>
    <lineage>
        <taxon>Eukaryota</taxon>
        <taxon>Fungi</taxon>
        <taxon>Dikarya</taxon>
        <taxon>Basidiomycota</taxon>
        <taxon>Agaricomycotina</taxon>
        <taxon>Tremellomycetes</taxon>
        <taxon>Tremellales</taxon>
        <taxon>Cryptococcaceae</taxon>
        <taxon>Cryptococcus</taxon>
        <taxon>Cryptococcus neoformans species complex</taxon>
    </lineage>
</organism>
<proteinExistence type="inferred from homology"/>
<comment type="function">
    <text evidence="1">Xylosylphosphotransferase that is specific for UDP-xylose as a donor and mannose as an acceptor to form a xylose-alpha-1-phosphate-6-mannose linkage. Functions in the O-glycosylation of proteins en route through the secretory pathway (By similarity).</text>
</comment>
<comment type="catalytic activity">
    <reaction>
        <text>3-alpha-D-mannopyranosyl-alpha-D-mannopyranose + UDP-alpha-D-xylose = 3-O-(6-O-alpha-D-xylosylphospho-alpha-D-mannopyranosyl)-alpha-D-mannopyranose + UMP + H(+)</text>
        <dbReference type="Rhea" id="RHEA:28262"/>
        <dbReference type="ChEBI" id="CHEBI:15378"/>
        <dbReference type="ChEBI" id="CHEBI:57632"/>
        <dbReference type="ChEBI" id="CHEBI:57865"/>
        <dbReference type="ChEBI" id="CHEBI:61663"/>
        <dbReference type="ChEBI" id="CHEBI:61665"/>
        <dbReference type="EC" id="2.7.8.32"/>
    </reaction>
</comment>
<comment type="cofactor">
    <cofactor evidence="1">
        <name>Mn(2+)</name>
        <dbReference type="ChEBI" id="CHEBI:29035"/>
    </cofactor>
</comment>
<comment type="subcellular location">
    <subcellularLocation>
        <location evidence="1">Golgi apparatus membrane</location>
        <topology evidence="1">Single-pass type I membrane protein</topology>
    </subcellularLocation>
</comment>
<comment type="similarity">
    <text evidence="4">Belongs to the XPT1 family.</text>
</comment>
<protein>
    <recommendedName>
        <fullName>3-O-alpha-D-mannopyranosyl-alpha-D-mannopyranose xylosylphosphotransferase</fullName>
        <ecNumber>2.7.8.32</ecNumber>
    </recommendedName>
    <alternativeName>
        <fullName>Xylosylphosphotransferase 1</fullName>
    </alternativeName>
</protein>
<feature type="chain" id="PRO_0000418546" description="3-O-alpha-D-mannopyranosyl-alpha-D-mannopyranose xylosylphosphotransferase">
    <location>
        <begin position="1"/>
        <end position="864"/>
    </location>
</feature>
<feature type="topological domain" description="Cytoplasmic" evidence="2">
    <location>
        <begin position="1"/>
        <end position="81"/>
    </location>
</feature>
<feature type="transmembrane region" description="Helical" evidence="2">
    <location>
        <begin position="82"/>
        <end position="102"/>
    </location>
</feature>
<feature type="topological domain" description="Lumenal" evidence="2">
    <location>
        <begin position="103"/>
        <end position="864"/>
    </location>
</feature>
<feature type="region of interest" description="Disordered" evidence="3">
    <location>
        <begin position="1"/>
        <end position="47"/>
    </location>
</feature>
<feature type="compositionally biased region" description="Pro residues" evidence="3">
    <location>
        <begin position="1"/>
        <end position="14"/>
    </location>
</feature>
<feature type="compositionally biased region" description="Low complexity" evidence="3">
    <location>
        <begin position="15"/>
        <end position="28"/>
    </location>
</feature>
<feature type="glycosylation site" description="N-linked (GlcNAc...) asparagine" evidence="2">
    <location>
        <position position="199"/>
    </location>
</feature>
<feature type="glycosylation site" description="N-linked (GlcNAc...) asparagine" evidence="2">
    <location>
        <position position="301"/>
    </location>
</feature>
<name>XPT1_CRYNB</name>
<gene>
    <name type="primary">XPT1</name>
    <name type="ordered locus">CNBJ0640</name>
</gene>
<accession>F5HID8</accession>
<keyword id="KW-0119">Carbohydrate metabolism</keyword>
<keyword id="KW-0325">Glycoprotein</keyword>
<keyword id="KW-0328">Glycosyltransferase</keyword>
<keyword id="KW-0333">Golgi apparatus</keyword>
<keyword id="KW-0464">Manganese</keyword>
<keyword id="KW-0472">Membrane</keyword>
<keyword id="KW-0808">Transferase</keyword>
<keyword id="KW-0812">Transmembrane</keyword>
<keyword id="KW-1133">Transmembrane helix</keyword>
<keyword id="KW-0859">Xylose metabolism</keyword>
<dbReference type="EC" id="2.7.8.32"/>
<dbReference type="EMBL" id="AAEY01000048">
    <property type="protein sequence ID" value="EAL18639.1"/>
    <property type="molecule type" value="Genomic_DNA"/>
</dbReference>
<dbReference type="RefSeq" id="XP_773286.1">
    <property type="nucleotide sequence ID" value="XM_768193.1"/>
</dbReference>
<dbReference type="GlyCosmos" id="F5HID8">
    <property type="glycosylation" value="2 sites, No reported glycans"/>
</dbReference>
<dbReference type="EnsemblFungi" id="AAW46052">
    <property type="protein sequence ID" value="AAW46052"/>
    <property type="gene ID" value="CNJ02890"/>
</dbReference>
<dbReference type="GeneID" id="4938403"/>
<dbReference type="KEGG" id="cnb:CNBJ0640"/>
<dbReference type="VEuPathDB" id="FungiDB:CNBJ0640"/>
<dbReference type="HOGENOM" id="CLU_005484_2_0_1"/>
<dbReference type="OrthoDB" id="3979at5206"/>
<dbReference type="GO" id="GO:0000139">
    <property type="term" value="C:Golgi membrane"/>
    <property type="evidence" value="ECO:0007669"/>
    <property type="project" value="UniProtKB-SubCell"/>
</dbReference>
<dbReference type="GO" id="GO:0016757">
    <property type="term" value="F:glycosyltransferase activity"/>
    <property type="evidence" value="ECO:0007669"/>
    <property type="project" value="UniProtKB-KW"/>
</dbReference>
<dbReference type="GO" id="GO:0003976">
    <property type="term" value="F:UDP-N-acetylglucosamine-lysosomal-enzyme N-acetylglucosaminephosphotransferase activity"/>
    <property type="evidence" value="ECO:0007669"/>
    <property type="project" value="TreeGrafter"/>
</dbReference>
<dbReference type="GO" id="GO:0046835">
    <property type="term" value="P:carbohydrate phosphorylation"/>
    <property type="evidence" value="ECO:0007669"/>
    <property type="project" value="TreeGrafter"/>
</dbReference>
<dbReference type="GO" id="GO:0042732">
    <property type="term" value="P:D-xylose metabolic process"/>
    <property type="evidence" value="ECO:0007669"/>
    <property type="project" value="UniProtKB-KW"/>
</dbReference>
<dbReference type="InterPro" id="IPR047141">
    <property type="entry name" value="Stealth"/>
</dbReference>
<dbReference type="InterPro" id="IPR031357">
    <property type="entry name" value="Stealth_CR3"/>
</dbReference>
<dbReference type="InterPro" id="IPR031356">
    <property type="entry name" value="Stealth_CR4"/>
</dbReference>
<dbReference type="PANTHER" id="PTHR24045">
    <property type="match status" value="1"/>
</dbReference>
<dbReference type="PANTHER" id="PTHR24045:SF0">
    <property type="entry name" value="N-ACETYLGLUCOSAMINE-1-PHOSPHOTRANSFERASE SUBUNITS ALPHA_BETA"/>
    <property type="match status" value="1"/>
</dbReference>
<dbReference type="Pfam" id="PF17102">
    <property type="entry name" value="Stealth_CR3"/>
    <property type="match status" value="1"/>
</dbReference>
<dbReference type="Pfam" id="PF17103">
    <property type="entry name" value="Stealth_CR4"/>
    <property type="match status" value="1"/>
</dbReference>
<sequence length="864" mass="99644">MPPTALPPLRPPAQPYDSYSSSLSPSSPRFHPASAPHGRRAPSPSRLESLLDAPHAPARSPSRKIRSALSRHIRPHLTPRTLTPLLLWTLALWLVHHFLFPFSSPLAALSRPKAEQHFLSTTFPPPPQRLGDDRLDSVDPRWRAFHPLPPPEPPFPRLRPTRFLPPQCLEQWFADGETLCGAKEMGEEETLDATWLWVNGSDHRWRDSMAEWREKENVNSPERHFREQNELVHSMRSVLDALPGHLRTFHLILADYPFNYPEDLDLVPPSIIPDLEVAASKGGQGRRHPRELARAPASVSNLTERLTPESISPSLARHLQSEWRILQTPTWLDFSRRDPSDPSHPFHPYSVSKAGEMRQHYAEASYPTLRYASHWEVFHIPSVDRDGREELMGEREWRENEWKKKALPSFNSMAIESRIGWLPGLADAIIALNDDFFLLRPHAVSDFHSPLYGSVIRFEHSYNQQVKPDVEKNHINDPGEMGGLYHANALLSRRFPHRLRPYFAHVPKVITRGLHHEASLMFQEALTLSSTRKFREMKIGEGDVQMQWLLTSLRVERWREALLWTWVVANMGTLSGSHDRWDSDTRSAIKHLFGFTEDDDDVVKIEVHRGERWTLEPGRMQKVFHQAGWEAPKATEFLFSSMDGIMPPLLRSGEDPSQNDRCIIDLNRCFGVFWTRQEDVLSADMMKRLTFQYPECGDCMIMALVTASGTLGLNAFFPPKETTITAPELGPGDAYPKYLPPPHLPLTPTWHEADYSLSNILSTTALPGEQVDIRQYCMRLLSRYLYLDAKSVSHFHMMKSAEHAKRVFKMIQDNPKVSILGMNDDIESDYDEVKRLMNEWFEMRWPRKAVWERDWDPVKDRYHD</sequence>
<evidence type="ECO:0000250" key="1"/>
<evidence type="ECO:0000255" key="2"/>
<evidence type="ECO:0000256" key="3">
    <source>
        <dbReference type="SAM" id="MobiDB-lite"/>
    </source>
</evidence>
<evidence type="ECO:0000305" key="4"/>